<keyword id="KW-0030">Aminoacyl-tRNA synthetase</keyword>
<keyword id="KW-0067">ATP-binding</keyword>
<keyword id="KW-0963">Cytoplasm</keyword>
<keyword id="KW-0436">Ligase</keyword>
<keyword id="KW-0547">Nucleotide-binding</keyword>
<keyword id="KW-0648">Protein biosynthesis</keyword>
<keyword id="KW-1185">Reference proteome</keyword>
<protein>
    <recommendedName>
        <fullName evidence="1">Proline--tRNA ligase</fullName>
        <ecNumber evidence="1">6.1.1.15</ecNumber>
    </recommendedName>
    <alternativeName>
        <fullName evidence="1">Prolyl-tRNA synthetase</fullName>
        <shortName evidence="1">ProRS</shortName>
    </alternativeName>
</protein>
<comment type="function">
    <text evidence="1">Catalyzes the attachment of proline to tRNA(Pro) in a two-step reaction: proline is first activated by ATP to form Pro-AMP and then transferred to the acceptor end of tRNA(Pro). As ProRS can inadvertently accommodate and process non-cognate amino acids such as alanine and cysteine, to avoid such errors it has two additional distinct editing activities against alanine. One activity is designated as 'pretransfer' editing and involves the tRNA(Pro)-independent hydrolysis of activated Ala-AMP. The other activity is designated 'posttransfer' editing and involves deacylation of mischarged Ala-tRNA(Pro). The misacylated Cys-tRNA(Pro) is not edited by ProRS.</text>
</comment>
<comment type="catalytic activity">
    <reaction evidence="1">
        <text>tRNA(Pro) + L-proline + ATP = L-prolyl-tRNA(Pro) + AMP + diphosphate</text>
        <dbReference type="Rhea" id="RHEA:14305"/>
        <dbReference type="Rhea" id="RHEA-COMP:9700"/>
        <dbReference type="Rhea" id="RHEA-COMP:9702"/>
        <dbReference type="ChEBI" id="CHEBI:30616"/>
        <dbReference type="ChEBI" id="CHEBI:33019"/>
        <dbReference type="ChEBI" id="CHEBI:60039"/>
        <dbReference type="ChEBI" id="CHEBI:78442"/>
        <dbReference type="ChEBI" id="CHEBI:78532"/>
        <dbReference type="ChEBI" id="CHEBI:456215"/>
        <dbReference type="EC" id="6.1.1.15"/>
    </reaction>
</comment>
<comment type="subunit">
    <text evidence="1">Homodimer.</text>
</comment>
<comment type="subcellular location">
    <subcellularLocation>
        <location evidence="1">Cytoplasm</location>
    </subcellularLocation>
</comment>
<comment type="domain">
    <text evidence="1">Consists of three domains: the N-terminal catalytic domain, the editing domain and the C-terminal anticodon-binding domain.</text>
</comment>
<comment type="similarity">
    <text evidence="1">Belongs to the class-II aminoacyl-tRNA synthetase family. ProS type 1 subfamily.</text>
</comment>
<dbReference type="EC" id="6.1.1.15" evidence="1"/>
<dbReference type="EMBL" id="AE017125">
    <property type="protein sequence ID" value="AAP78323.1"/>
    <property type="molecule type" value="Genomic_DNA"/>
</dbReference>
<dbReference type="RefSeq" id="WP_011116565.1">
    <property type="nucleotide sequence ID" value="NC_004917.1"/>
</dbReference>
<dbReference type="SMR" id="Q7VFF0"/>
<dbReference type="STRING" id="235279.HH_1726"/>
<dbReference type="KEGG" id="hhe:HH_1726"/>
<dbReference type="eggNOG" id="COG0442">
    <property type="taxonomic scope" value="Bacteria"/>
</dbReference>
<dbReference type="HOGENOM" id="CLU_016739_0_0_7"/>
<dbReference type="OrthoDB" id="9809052at2"/>
<dbReference type="Proteomes" id="UP000002495">
    <property type="component" value="Chromosome"/>
</dbReference>
<dbReference type="GO" id="GO:0005829">
    <property type="term" value="C:cytosol"/>
    <property type="evidence" value="ECO:0007669"/>
    <property type="project" value="TreeGrafter"/>
</dbReference>
<dbReference type="GO" id="GO:0002161">
    <property type="term" value="F:aminoacyl-tRNA deacylase activity"/>
    <property type="evidence" value="ECO:0007669"/>
    <property type="project" value="InterPro"/>
</dbReference>
<dbReference type="GO" id="GO:0005524">
    <property type="term" value="F:ATP binding"/>
    <property type="evidence" value="ECO:0007669"/>
    <property type="project" value="UniProtKB-UniRule"/>
</dbReference>
<dbReference type="GO" id="GO:0004827">
    <property type="term" value="F:proline-tRNA ligase activity"/>
    <property type="evidence" value="ECO:0007669"/>
    <property type="project" value="UniProtKB-UniRule"/>
</dbReference>
<dbReference type="GO" id="GO:0006433">
    <property type="term" value="P:prolyl-tRNA aminoacylation"/>
    <property type="evidence" value="ECO:0007669"/>
    <property type="project" value="UniProtKB-UniRule"/>
</dbReference>
<dbReference type="CDD" id="cd04334">
    <property type="entry name" value="ProRS-INS"/>
    <property type="match status" value="1"/>
</dbReference>
<dbReference type="CDD" id="cd00861">
    <property type="entry name" value="ProRS_anticodon_short"/>
    <property type="match status" value="1"/>
</dbReference>
<dbReference type="CDD" id="cd00779">
    <property type="entry name" value="ProRS_core_prok"/>
    <property type="match status" value="1"/>
</dbReference>
<dbReference type="FunFam" id="3.30.930.10:FF:000065">
    <property type="entry name" value="Proline--tRNA ligase"/>
    <property type="match status" value="1"/>
</dbReference>
<dbReference type="FunFam" id="3.30.930.10:FF:000066">
    <property type="entry name" value="Proline--tRNA ligase"/>
    <property type="match status" value="1"/>
</dbReference>
<dbReference type="Gene3D" id="3.40.50.800">
    <property type="entry name" value="Anticodon-binding domain"/>
    <property type="match status" value="1"/>
</dbReference>
<dbReference type="Gene3D" id="3.30.930.10">
    <property type="entry name" value="Bira Bifunctional Protein, Domain 2"/>
    <property type="match status" value="2"/>
</dbReference>
<dbReference type="HAMAP" id="MF_01569">
    <property type="entry name" value="Pro_tRNA_synth_type1"/>
    <property type="match status" value="1"/>
</dbReference>
<dbReference type="InterPro" id="IPR002314">
    <property type="entry name" value="aa-tRNA-synt_IIb"/>
</dbReference>
<dbReference type="InterPro" id="IPR006195">
    <property type="entry name" value="aa-tRNA-synth_II"/>
</dbReference>
<dbReference type="InterPro" id="IPR045864">
    <property type="entry name" value="aa-tRNA-synth_II/BPL/LPL"/>
</dbReference>
<dbReference type="InterPro" id="IPR004154">
    <property type="entry name" value="Anticodon-bd"/>
</dbReference>
<dbReference type="InterPro" id="IPR036621">
    <property type="entry name" value="Anticodon-bd_dom_sf"/>
</dbReference>
<dbReference type="InterPro" id="IPR002316">
    <property type="entry name" value="Pro-tRNA-ligase_IIa"/>
</dbReference>
<dbReference type="InterPro" id="IPR004500">
    <property type="entry name" value="Pro-tRNA-synth_IIa_bac-type"/>
</dbReference>
<dbReference type="InterPro" id="IPR023717">
    <property type="entry name" value="Pro-tRNA-Synthase_IIa_type1"/>
</dbReference>
<dbReference type="InterPro" id="IPR050062">
    <property type="entry name" value="Pro-tRNA_synthetase"/>
</dbReference>
<dbReference type="InterPro" id="IPR044140">
    <property type="entry name" value="ProRS_anticodon_short"/>
</dbReference>
<dbReference type="InterPro" id="IPR033730">
    <property type="entry name" value="ProRS_core_prok"/>
</dbReference>
<dbReference type="InterPro" id="IPR036754">
    <property type="entry name" value="YbaK/aa-tRNA-synt-asso_dom_sf"/>
</dbReference>
<dbReference type="InterPro" id="IPR007214">
    <property type="entry name" value="YbaK/aa-tRNA-synth-assoc-dom"/>
</dbReference>
<dbReference type="NCBIfam" id="NF006625">
    <property type="entry name" value="PRK09194.1"/>
    <property type="match status" value="1"/>
</dbReference>
<dbReference type="NCBIfam" id="TIGR00409">
    <property type="entry name" value="proS_fam_II"/>
    <property type="match status" value="1"/>
</dbReference>
<dbReference type="PANTHER" id="PTHR42753">
    <property type="entry name" value="MITOCHONDRIAL RIBOSOME PROTEIN L39/PROLYL-TRNA LIGASE FAMILY MEMBER"/>
    <property type="match status" value="1"/>
</dbReference>
<dbReference type="PANTHER" id="PTHR42753:SF2">
    <property type="entry name" value="PROLINE--TRNA LIGASE"/>
    <property type="match status" value="1"/>
</dbReference>
<dbReference type="Pfam" id="PF03129">
    <property type="entry name" value="HGTP_anticodon"/>
    <property type="match status" value="1"/>
</dbReference>
<dbReference type="Pfam" id="PF00587">
    <property type="entry name" value="tRNA-synt_2b"/>
    <property type="match status" value="1"/>
</dbReference>
<dbReference type="Pfam" id="PF04073">
    <property type="entry name" value="tRNA_edit"/>
    <property type="match status" value="1"/>
</dbReference>
<dbReference type="PRINTS" id="PR01046">
    <property type="entry name" value="TRNASYNTHPRO"/>
</dbReference>
<dbReference type="SUPFAM" id="SSF52954">
    <property type="entry name" value="Class II aaRS ABD-related"/>
    <property type="match status" value="1"/>
</dbReference>
<dbReference type="SUPFAM" id="SSF55681">
    <property type="entry name" value="Class II aaRS and biotin synthetases"/>
    <property type="match status" value="1"/>
</dbReference>
<dbReference type="SUPFAM" id="SSF55826">
    <property type="entry name" value="YbaK/ProRS associated domain"/>
    <property type="match status" value="1"/>
</dbReference>
<dbReference type="PROSITE" id="PS50862">
    <property type="entry name" value="AA_TRNA_LIGASE_II"/>
    <property type="match status" value="1"/>
</dbReference>
<evidence type="ECO:0000255" key="1">
    <source>
        <dbReference type="HAMAP-Rule" id="MF_01569"/>
    </source>
</evidence>
<sequence>MRFSQLFVNTLKESPKDAVLKSHQYLIRGGFIQQIGSGIYNFLPLGKKLLDKVRFIVKEEMDKSGAQEILMGFVTPAELWRESGRYEQYGRELLRFVDRKENEFVLGPTHEEVITHIAKNTIKSYKQLPLHLYQIHSKFRDELRPRFGLMRGREFIMKDGYSFHSNYADLNREFDVMEATYKRILQRMGLEFKVVEADSGAIGGSGSKEFMVLAPCGEDTIVVCKGCEYGANIEASKRAPRTAPRPNEIKYDSNAPQAAFARFFTPDIKNIESLSAFFKVDKFWTIKAIVKKAIKANNESELVYFFVRGDDEGEETKMLNAINKHTNCYLALEDASVEEIQAAGLEVGFIGAYGLRHITQATHIYFDESLRDASNLICGANEKDYHFVGVDLSTFEGLEYADIAQSKEGDLCPKCAQELYYTKGIEVGHIFKLGDKYSRAMNAQFLDNDGKTQPLIMGCYGFGISRILPAILEQKSDDLGCIWSKEVSVFDIAIIISNTKDSVQNDFGSALYEILSACGIDVLLDERDERFGVKMKDFELLGFHSALIVGKGLNEGKVELIKREGLKKYELCATDKEILLEEILKIIA</sequence>
<name>SYP_HELHP</name>
<gene>
    <name evidence="1" type="primary">proS</name>
    <name type="ordered locus">HH_1726</name>
</gene>
<feature type="chain" id="PRO_0000248703" description="Proline--tRNA ligase">
    <location>
        <begin position="1"/>
        <end position="588"/>
    </location>
</feature>
<organism>
    <name type="scientific">Helicobacter hepaticus (strain ATCC 51449 / 3B1)</name>
    <dbReference type="NCBI Taxonomy" id="235279"/>
    <lineage>
        <taxon>Bacteria</taxon>
        <taxon>Pseudomonadati</taxon>
        <taxon>Campylobacterota</taxon>
        <taxon>Epsilonproteobacteria</taxon>
        <taxon>Campylobacterales</taxon>
        <taxon>Helicobacteraceae</taxon>
        <taxon>Helicobacter</taxon>
    </lineage>
</organism>
<proteinExistence type="inferred from homology"/>
<accession>Q7VFF0</accession>
<reference key="1">
    <citation type="journal article" date="2003" name="Proc. Natl. Acad. Sci. U.S.A.">
        <title>The complete genome sequence of the carcinogenic bacterium Helicobacter hepaticus.</title>
        <authorList>
            <person name="Suerbaum S."/>
            <person name="Josenhans C."/>
            <person name="Sterzenbach T."/>
            <person name="Drescher B."/>
            <person name="Brandt P."/>
            <person name="Bell M."/>
            <person name="Droege M."/>
            <person name="Fartmann B."/>
            <person name="Fischer H.-P."/>
            <person name="Ge Z."/>
            <person name="Hoerster A."/>
            <person name="Holland R."/>
            <person name="Klein K."/>
            <person name="Koenig J."/>
            <person name="Macko L."/>
            <person name="Mendz G.L."/>
            <person name="Nyakatura G."/>
            <person name="Schauer D.B."/>
            <person name="Shen Z."/>
            <person name="Weber J."/>
            <person name="Frosch M."/>
            <person name="Fox J.G."/>
        </authorList>
    </citation>
    <scope>NUCLEOTIDE SEQUENCE [LARGE SCALE GENOMIC DNA]</scope>
    <source>
        <strain>ATCC 51449 / 3B1</strain>
    </source>
</reference>